<protein>
    <recommendedName>
        <fullName evidence="3">ATPase GET3</fullName>
        <ecNumber evidence="1">3.6.4.-</ecNumber>
    </recommendedName>
    <alternativeName>
        <fullName evidence="3">Arsenical pump-driving ATPase</fullName>
    </alternativeName>
    <alternativeName>
        <fullName evidence="3">Arsenite-stimulated ATPase</fullName>
    </alternativeName>
    <alternativeName>
        <fullName evidence="3">Guided entry of tail-anchored proteins factor 3, ATPase</fullName>
    </alternativeName>
</protein>
<dbReference type="EC" id="3.6.4.-" evidence="1"/>
<dbReference type="EMBL" id="BC073453">
    <property type="protein sequence ID" value="AAH73453.1"/>
    <property type="molecule type" value="mRNA"/>
</dbReference>
<dbReference type="RefSeq" id="NP_001085870.1">
    <property type="nucleotide sequence ID" value="NM_001092401.1"/>
</dbReference>
<dbReference type="SMR" id="Q6GNQ1"/>
<dbReference type="BioGRID" id="102460">
    <property type="interactions" value="2"/>
</dbReference>
<dbReference type="DNASU" id="444297"/>
<dbReference type="GeneID" id="444297"/>
<dbReference type="KEGG" id="xla:444297"/>
<dbReference type="AGR" id="Xenbase:XB-GENE-1013231"/>
<dbReference type="CTD" id="444297"/>
<dbReference type="Xenbase" id="XB-GENE-1013231">
    <property type="gene designation" value="get3.S"/>
</dbReference>
<dbReference type="OrthoDB" id="1770at2759"/>
<dbReference type="Proteomes" id="UP000186698">
    <property type="component" value="Chromosome 3S"/>
</dbReference>
<dbReference type="Bgee" id="444297">
    <property type="expression patterns" value="Expressed in brain and 19 other cell types or tissues"/>
</dbReference>
<dbReference type="GO" id="GO:0043529">
    <property type="term" value="C:GET complex"/>
    <property type="evidence" value="ECO:0000318"/>
    <property type="project" value="GO_Central"/>
</dbReference>
<dbReference type="GO" id="GO:0005730">
    <property type="term" value="C:nucleolus"/>
    <property type="evidence" value="ECO:0007669"/>
    <property type="project" value="UniProtKB-SubCell"/>
</dbReference>
<dbReference type="GO" id="GO:0005524">
    <property type="term" value="F:ATP binding"/>
    <property type="evidence" value="ECO:0007669"/>
    <property type="project" value="UniProtKB-UniRule"/>
</dbReference>
<dbReference type="GO" id="GO:0016887">
    <property type="term" value="F:ATP hydrolysis activity"/>
    <property type="evidence" value="ECO:0000318"/>
    <property type="project" value="GO_Central"/>
</dbReference>
<dbReference type="GO" id="GO:0046872">
    <property type="term" value="F:metal ion binding"/>
    <property type="evidence" value="ECO:0007669"/>
    <property type="project" value="UniProtKB-KW"/>
</dbReference>
<dbReference type="GO" id="GO:0071816">
    <property type="term" value="P:tail-anchored membrane protein insertion into ER membrane"/>
    <property type="evidence" value="ECO:0000318"/>
    <property type="project" value="GO_Central"/>
</dbReference>
<dbReference type="CDD" id="cd02035">
    <property type="entry name" value="ArsA"/>
    <property type="match status" value="1"/>
</dbReference>
<dbReference type="FunFam" id="3.40.50.300:FF:000235">
    <property type="entry name" value="ATPase ASNA1"/>
    <property type="match status" value="1"/>
</dbReference>
<dbReference type="Gene3D" id="3.40.50.300">
    <property type="entry name" value="P-loop containing nucleotide triphosphate hydrolases"/>
    <property type="match status" value="1"/>
</dbReference>
<dbReference type="HAMAP" id="MF_03112">
    <property type="entry name" value="Asna1_Get3"/>
    <property type="match status" value="1"/>
</dbReference>
<dbReference type="InterPro" id="IPR025723">
    <property type="entry name" value="Anion-transp_ATPase-like_dom"/>
</dbReference>
<dbReference type="InterPro" id="IPR016300">
    <property type="entry name" value="ATPase_ArsA/GET3"/>
</dbReference>
<dbReference type="InterPro" id="IPR027542">
    <property type="entry name" value="ATPase_ArsA/GET3_euk"/>
</dbReference>
<dbReference type="InterPro" id="IPR027417">
    <property type="entry name" value="P-loop_NTPase"/>
</dbReference>
<dbReference type="NCBIfam" id="TIGR00345">
    <property type="entry name" value="GET3_arsA_TRC40"/>
    <property type="match status" value="1"/>
</dbReference>
<dbReference type="PANTHER" id="PTHR10803">
    <property type="entry name" value="ARSENICAL PUMP-DRIVING ATPASE ARSENITE-TRANSLOCATING ATPASE"/>
    <property type="match status" value="1"/>
</dbReference>
<dbReference type="PANTHER" id="PTHR10803:SF3">
    <property type="entry name" value="ATPASE GET3"/>
    <property type="match status" value="1"/>
</dbReference>
<dbReference type="Pfam" id="PF02374">
    <property type="entry name" value="ArsA_ATPase"/>
    <property type="match status" value="1"/>
</dbReference>
<dbReference type="SUPFAM" id="SSF52540">
    <property type="entry name" value="P-loop containing nucleoside triphosphate hydrolases"/>
    <property type="match status" value="1"/>
</dbReference>
<sequence length="342" mass="38316">MAAPVDDEFEDAPDVEPLEPTLSNVIDQRSLRWIFVGGKGGVGKTTCSCSLAVQLSLVRDSVLIISTDPAHNISDAFDQKFSKVPTKVRGYDNLFAMEIDPSLGVAELPDEIFEEDNMLSMGKKMMQEAMSAFPGIDEAMSYAEVMRLVKGMNFSVVVFDTAPTGHTLRLLNFPTIVERGLGRLMQIKNQISPFISQMCNMLGLGDMNADQLASKLEETLPVIRSVSEQFKDPEQTTFICVCIAEFLSLYETERLIQELAKCSIDTHNIIVNQLVFPDPEKPCRMCEARHKIQSKYLDQMEDLYEDFHIAKLPLLPHEVRGVENVNTFSKLLLEPYKPPSGK</sequence>
<organism>
    <name type="scientific">Xenopus laevis</name>
    <name type="common">African clawed frog</name>
    <dbReference type="NCBI Taxonomy" id="8355"/>
    <lineage>
        <taxon>Eukaryota</taxon>
        <taxon>Metazoa</taxon>
        <taxon>Chordata</taxon>
        <taxon>Craniata</taxon>
        <taxon>Vertebrata</taxon>
        <taxon>Euteleostomi</taxon>
        <taxon>Amphibia</taxon>
        <taxon>Batrachia</taxon>
        <taxon>Anura</taxon>
        <taxon>Pipoidea</taxon>
        <taxon>Pipidae</taxon>
        <taxon>Xenopodinae</taxon>
        <taxon>Xenopus</taxon>
        <taxon>Xenopus</taxon>
    </lineage>
</organism>
<keyword id="KW-0067">ATP-binding</keyword>
<keyword id="KW-0963">Cytoplasm</keyword>
<keyword id="KW-0256">Endoplasmic reticulum</keyword>
<keyword id="KW-0378">Hydrolase</keyword>
<keyword id="KW-0479">Metal-binding</keyword>
<keyword id="KW-0547">Nucleotide-binding</keyword>
<keyword id="KW-0539">Nucleus</keyword>
<keyword id="KW-1185">Reference proteome</keyword>
<keyword id="KW-0813">Transport</keyword>
<keyword id="KW-0862">Zinc</keyword>
<accession>Q6GNQ1</accession>
<proteinExistence type="evidence at transcript level"/>
<evidence type="ECO:0000250" key="1">
    <source>
        <dbReference type="UniProtKB" id="O43681"/>
    </source>
</evidence>
<evidence type="ECO:0000250" key="2">
    <source>
        <dbReference type="UniProtKB" id="Q6IQE5"/>
    </source>
</evidence>
<evidence type="ECO:0000255" key="3">
    <source>
        <dbReference type="HAMAP-Rule" id="MF_03112"/>
    </source>
</evidence>
<gene>
    <name evidence="3" type="primary">get3</name>
    <name evidence="3" type="synonym">asna1</name>
</gene>
<reference key="1">
    <citation type="submission" date="2004-06" db="EMBL/GenBank/DDBJ databases">
        <authorList>
            <consortium name="NIH - Xenopus Gene Collection (XGC) project"/>
        </authorList>
    </citation>
    <scope>NUCLEOTIDE SEQUENCE [LARGE SCALE MRNA]</scope>
    <source>
        <tissue>Embryo</tissue>
    </source>
</reference>
<name>GET3_XENLA</name>
<feature type="chain" id="PRO_0000348231" description="ATPase GET3">
    <location>
        <begin position="1"/>
        <end position="342"/>
    </location>
</feature>
<feature type="active site" evidence="3">
    <location>
        <position position="68"/>
    </location>
</feature>
<feature type="binding site" evidence="2 3">
    <location>
        <position position="39"/>
    </location>
    <ligand>
        <name>ATP</name>
        <dbReference type="ChEBI" id="CHEBI:30616"/>
        <note>ligand shared between dimeric partners</note>
    </ligand>
</feature>
<feature type="binding site" evidence="2 3">
    <location>
        <position position="40"/>
    </location>
    <ligand>
        <name>ATP</name>
        <dbReference type="ChEBI" id="CHEBI:30616"/>
        <note>ligand shared between dimeric partners</note>
    </ligand>
</feature>
<feature type="binding site" evidence="2 3">
    <location>
        <position position="43"/>
    </location>
    <ligand>
        <name>ATP</name>
        <dbReference type="ChEBI" id="CHEBI:30616"/>
        <note>ligand shared between dimeric partners</note>
    </ligand>
</feature>
<feature type="binding site" evidence="2 3">
    <location>
        <position position="44"/>
    </location>
    <ligand>
        <name>ATP</name>
        <dbReference type="ChEBI" id="CHEBI:30616"/>
        <note>ligand shared between dimeric partners</note>
    </ligand>
</feature>
<feature type="binding site" evidence="2 3">
    <location>
        <position position="45"/>
    </location>
    <ligand>
        <name>ATP</name>
        <dbReference type="ChEBI" id="CHEBI:30616"/>
        <note>ligand shared between dimeric partners</note>
    </ligand>
</feature>
<feature type="binding site" evidence="2 3">
    <location>
        <position position="46"/>
    </location>
    <ligand>
        <name>ATP</name>
        <dbReference type="ChEBI" id="CHEBI:30616"/>
        <note>ligand shared between dimeric partners</note>
    </ligand>
</feature>
<feature type="binding site" evidence="2 3">
    <location>
        <position position="245"/>
    </location>
    <ligand>
        <name>ATP</name>
        <dbReference type="ChEBI" id="CHEBI:30616"/>
        <note>ligand shared between dimeric partners</note>
    </ligand>
</feature>
<feature type="binding site" evidence="2 3">
    <location>
        <position position="272"/>
    </location>
    <ligand>
        <name>ATP</name>
        <dbReference type="ChEBI" id="CHEBI:30616"/>
        <note>ligand shared between dimeric partners</note>
    </ligand>
</feature>
<feature type="binding site" evidence="2 3">
    <location>
        <position position="283"/>
    </location>
    <ligand>
        <name>Zn(2+)</name>
        <dbReference type="ChEBI" id="CHEBI:29105"/>
        <note>ligand shared between dimeric partners</note>
    </ligand>
</feature>
<feature type="binding site" evidence="2 3">
    <location>
        <position position="286"/>
    </location>
    <ligand>
        <name>Zn(2+)</name>
        <dbReference type="ChEBI" id="CHEBI:29105"/>
        <note>ligand shared between dimeric partners</note>
    </ligand>
</feature>
<feature type="binding site" evidence="2">
    <location>
        <position position="313"/>
    </location>
    <ligand>
        <name>ATP</name>
        <dbReference type="ChEBI" id="CHEBI:30616"/>
        <note>ligand shared between dimeric partners</note>
    </ligand>
</feature>
<feature type="binding site" evidence="2">
    <location>
        <position position="315"/>
    </location>
    <ligand>
        <name>ATP</name>
        <dbReference type="ChEBI" id="CHEBI:30616"/>
        <note>ligand shared between dimeric partners</note>
    </ligand>
</feature>
<comment type="function">
    <text evidence="3">ATPase required for the post-translational delivery of tail-anchored (TA) proteins to the endoplasmic reticulum. Recognizes and selectively binds the transmembrane domain of TA proteins in the cytosol. This complex then targets to the endoplasmic reticulum by membrane-bound receptors GET1/WRB and CAMLG/GET2, where the tail-anchored protein is released for insertion. This process is regulated by ATP binding and hydrolysis. ATP binding drives the homodimer towards the closed dimer state, facilitating recognition of newly synthesized TA membrane proteins. ATP hydrolysis is required for insertion. Subsequently, the homodimer reverts towards the open dimer state, lowering its affinity for the GET1-CAMLG receptor, and returning it to the cytosol to initiate a new round of targeting.</text>
</comment>
<comment type="catalytic activity">
    <reaction evidence="1">
        <text>ATP + H2O = ADP + phosphate + H(+)</text>
        <dbReference type="Rhea" id="RHEA:13065"/>
        <dbReference type="ChEBI" id="CHEBI:15377"/>
        <dbReference type="ChEBI" id="CHEBI:15378"/>
        <dbReference type="ChEBI" id="CHEBI:30616"/>
        <dbReference type="ChEBI" id="CHEBI:43474"/>
        <dbReference type="ChEBI" id="CHEBI:456216"/>
    </reaction>
</comment>
<comment type="subunit">
    <text evidence="3">Homodimer. Component of the Golgi to ER traffic (GET) complex, which is composed of GET1/WRB, CAMLG/GET2 and GET3/TRC40. Within the complex, CAMLG and GET1 form a heterotetramer which is stabilized by phosphatidylinositol binding and which binds to the GET3 homodimer.</text>
</comment>
<comment type="subcellular location">
    <subcellularLocation>
        <location evidence="1 3">Cytoplasm</location>
    </subcellularLocation>
    <subcellularLocation>
        <location evidence="1 3">Endoplasmic reticulum</location>
    </subcellularLocation>
    <subcellularLocation>
        <location evidence="1 3">Nucleus</location>
        <location evidence="1 3">Nucleolus</location>
    </subcellularLocation>
</comment>
<comment type="similarity">
    <text evidence="3">Belongs to the arsA ATPase family.</text>
</comment>